<evidence type="ECO:0000255" key="1">
    <source>
        <dbReference type="HAMAP-Rule" id="MF_00057"/>
    </source>
</evidence>
<organism>
    <name type="scientific">Salmonella arizonae (strain ATCC BAA-731 / CDC346-86 / RSK2980)</name>
    <dbReference type="NCBI Taxonomy" id="41514"/>
    <lineage>
        <taxon>Bacteria</taxon>
        <taxon>Pseudomonadati</taxon>
        <taxon>Pseudomonadota</taxon>
        <taxon>Gammaproteobacteria</taxon>
        <taxon>Enterobacterales</taxon>
        <taxon>Enterobacteriaceae</taxon>
        <taxon>Salmonella</taxon>
    </lineage>
</organism>
<name>KDSB_SALAR</name>
<sequence>MSFVVIIPARFSSTRLPGKPLLDINGKPMIVHVLERARESGAERIIVATDHEDVARAVEAAGGEVCITRADHQSGTERLAEVVEKCGFSDDTVIVNVQGDEPMIPAVIIRQVAENLAQRQVGMATLAAPIHSAEEAFNPNAVKVVLDAEGYALYFSRATIPWDRDRFAKSLETVGDTCLRHLGIYGYRAGFIRRYVSWQPSPLEQIEMLEQLRVLWYGEKIHVAVAKAVPGTGVDTADDLERVRAEMR</sequence>
<proteinExistence type="inferred from homology"/>
<comment type="function">
    <text evidence="1">Activates KDO (a required 8-carbon sugar) for incorporation into bacterial lipopolysaccharide in Gram-negative bacteria.</text>
</comment>
<comment type="catalytic activity">
    <reaction evidence="1">
        <text>3-deoxy-alpha-D-manno-oct-2-ulosonate + CTP = CMP-3-deoxy-beta-D-manno-octulosonate + diphosphate</text>
        <dbReference type="Rhea" id="RHEA:23448"/>
        <dbReference type="ChEBI" id="CHEBI:33019"/>
        <dbReference type="ChEBI" id="CHEBI:37563"/>
        <dbReference type="ChEBI" id="CHEBI:85986"/>
        <dbReference type="ChEBI" id="CHEBI:85987"/>
        <dbReference type="EC" id="2.7.7.38"/>
    </reaction>
</comment>
<comment type="pathway">
    <text evidence="1">Nucleotide-sugar biosynthesis; CMP-3-deoxy-D-manno-octulosonate biosynthesis; CMP-3-deoxy-D-manno-octulosonate from 3-deoxy-D-manno-octulosonate and CTP: step 1/1.</text>
</comment>
<comment type="pathway">
    <text evidence="1">Bacterial outer membrane biogenesis; lipopolysaccharide biosynthesis.</text>
</comment>
<comment type="subcellular location">
    <subcellularLocation>
        <location evidence="1">Cytoplasm</location>
    </subcellularLocation>
</comment>
<comment type="similarity">
    <text evidence="1">Belongs to the KdsB family.</text>
</comment>
<gene>
    <name evidence="1" type="primary">kdsB</name>
    <name type="ordered locus">SARI_01974</name>
</gene>
<feature type="chain" id="PRO_1000074998" description="3-deoxy-manno-octulosonate cytidylyltransferase">
    <location>
        <begin position="1"/>
        <end position="248"/>
    </location>
</feature>
<dbReference type="EC" id="2.7.7.38" evidence="1"/>
<dbReference type="EMBL" id="CP000880">
    <property type="protein sequence ID" value="ABX21855.1"/>
    <property type="molecule type" value="Genomic_DNA"/>
</dbReference>
<dbReference type="SMR" id="A9MHW5"/>
<dbReference type="STRING" id="41514.SARI_01974"/>
<dbReference type="KEGG" id="ses:SARI_01974"/>
<dbReference type="HOGENOM" id="CLU_065038_1_0_6"/>
<dbReference type="UniPathway" id="UPA00030"/>
<dbReference type="UniPathway" id="UPA00358">
    <property type="reaction ID" value="UER00476"/>
</dbReference>
<dbReference type="Proteomes" id="UP000002084">
    <property type="component" value="Chromosome"/>
</dbReference>
<dbReference type="GO" id="GO:0005829">
    <property type="term" value="C:cytosol"/>
    <property type="evidence" value="ECO:0007669"/>
    <property type="project" value="TreeGrafter"/>
</dbReference>
<dbReference type="GO" id="GO:0008690">
    <property type="term" value="F:3-deoxy-manno-octulosonate cytidylyltransferase activity"/>
    <property type="evidence" value="ECO:0007669"/>
    <property type="project" value="UniProtKB-UniRule"/>
</dbReference>
<dbReference type="GO" id="GO:0033468">
    <property type="term" value="P:CMP-keto-3-deoxy-D-manno-octulosonic acid biosynthetic process"/>
    <property type="evidence" value="ECO:0007669"/>
    <property type="project" value="UniProtKB-UniRule"/>
</dbReference>
<dbReference type="GO" id="GO:0009103">
    <property type="term" value="P:lipopolysaccharide biosynthetic process"/>
    <property type="evidence" value="ECO:0007669"/>
    <property type="project" value="UniProtKB-UniRule"/>
</dbReference>
<dbReference type="CDD" id="cd02517">
    <property type="entry name" value="CMP-KDO-Synthetase"/>
    <property type="match status" value="1"/>
</dbReference>
<dbReference type="FunFam" id="3.90.550.10:FF:000011">
    <property type="entry name" value="3-deoxy-manno-octulosonate cytidylyltransferase"/>
    <property type="match status" value="1"/>
</dbReference>
<dbReference type="Gene3D" id="3.90.550.10">
    <property type="entry name" value="Spore Coat Polysaccharide Biosynthesis Protein SpsA, Chain A"/>
    <property type="match status" value="1"/>
</dbReference>
<dbReference type="HAMAP" id="MF_00057">
    <property type="entry name" value="KdsB"/>
    <property type="match status" value="1"/>
</dbReference>
<dbReference type="InterPro" id="IPR003329">
    <property type="entry name" value="Cytidylyl_trans"/>
</dbReference>
<dbReference type="InterPro" id="IPR004528">
    <property type="entry name" value="KdsB"/>
</dbReference>
<dbReference type="InterPro" id="IPR029044">
    <property type="entry name" value="Nucleotide-diphossugar_trans"/>
</dbReference>
<dbReference type="NCBIfam" id="TIGR00466">
    <property type="entry name" value="kdsB"/>
    <property type="match status" value="1"/>
</dbReference>
<dbReference type="NCBIfam" id="NF003950">
    <property type="entry name" value="PRK05450.1-3"/>
    <property type="match status" value="1"/>
</dbReference>
<dbReference type="NCBIfam" id="NF003952">
    <property type="entry name" value="PRK05450.1-5"/>
    <property type="match status" value="1"/>
</dbReference>
<dbReference type="NCBIfam" id="NF009905">
    <property type="entry name" value="PRK13368.1"/>
    <property type="match status" value="1"/>
</dbReference>
<dbReference type="PANTHER" id="PTHR42866">
    <property type="entry name" value="3-DEOXY-MANNO-OCTULOSONATE CYTIDYLYLTRANSFERASE"/>
    <property type="match status" value="1"/>
</dbReference>
<dbReference type="PANTHER" id="PTHR42866:SF2">
    <property type="entry name" value="3-DEOXY-MANNO-OCTULOSONATE CYTIDYLYLTRANSFERASE, MITOCHONDRIAL"/>
    <property type="match status" value="1"/>
</dbReference>
<dbReference type="Pfam" id="PF02348">
    <property type="entry name" value="CTP_transf_3"/>
    <property type="match status" value="1"/>
</dbReference>
<dbReference type="SUPFAM" id="SSF53448">
    <property type="entry name" value="Nucleotide-diphospho-sugar transferases"/>
    <property type="match status" value="1"/>
</dbReference>
<reference key="1">
    <citation type="submission" date="2007-11" db="EMBL/GenBank/DDBJ databases">
        <authorList>
            <consortium name="The Salmonella enterica serovar Arizonae Genome Sequencing Project"/>
            <person name="McClelland M."/>
            <person name="Sanderson E.K."/>
            <person name="Porwollik S."/>
            <person name="Spieth J."/>
            <person name="Clifton W.S."/>
            <person name="Fulton R."/>
            <person name="Chunyan W."/>
            <person name="Wollam A."/>
            <person name="Shah N."/>
            <person name="Pepin K."/>
            <person name="Bhonagiri V."/>
            <person name="Nash W."/>
            <person name="Johnson M."/>
            <person name="Thiruvilangam P."/>
            <person name="Wilson R."/>
        </authorList>
    </citation>
    <scope>NUCLEOTIDE SEQUENCE [LARGE SCALE GENOMIC DNA]</scope>
    <source>
        <strain>ATCC BAA-731 / CDC346-86 / RSK2980</strain>
    </source>
</reference>
<protein>
    <recommendedName>
        <fullName evidence="1">3-deoxy-manno-octulosonate cytidylyltransferase</fullName>
        <ecNumber evidence="1">2.7.7.38</ecNumber>
    </recommendedName>
    <alternativeName>
        <fullName evidence="1">CMP-2-keto-3-deoxyoctulosonic acid synthase</fullName>
        <shortName evidence="1">CKS</shortName>
        <shortName evidence="1">CMP-KDO synthase</shortName>
    </alternativeName>
</protein>
<accession>A9MHW5</accession>
<keyword id="KW-0963">Cytoplasm</keyword>
<keyword id="KW-0448">Lipopolysaccharide biosynthesis</keyword>
<keyword id="KW-0548">Nucleotidyltransferase</keyword>
<keyword id="KW-1185">Reference proteome</keyword>
<keyword id="KW-0808">Transferase</keyword>